<gene>
    <name evidence="1" type="primary">ispE</name>
    <name type="ordered locus">AZOSEA07630</name>
    <name type="ORF">ebA1405</name>
</gene>
<comment type="function">
    <text evidence="1">Catalyzes the phosphorylation of the position 2 hydroxy group of 4-diphosphocytidyl-2C-methyl-D-erythritol.</text>
</comment>
<comment type="catalytic activity">
    <reaction evidence="1">
        <text>4-CDP-2-C-methyl-D-erythritol + ATP = 4-CDP-2-C-methyl-D-erythritol 2-phosphate + ADP + H(+)</text>
        <dbReference type="Rhea" id="RHEA:18437"/>
        <dbReference type="ChEBI" id="CHEBI:15378"/>
        <dbReference type="ChEBI" id="CHEBI:30616"/>
        <dbReference type="ChEBI" id="CHEBI:57823"/>
        <dbReference type="ChEBI" id="CHEBI:57919"/>
        <dbReference type="ChEBI" id="CHEBI:456216"/>
        <dbReference type="EC" id="2.7.1.148"/>
    </reaction>
</comment>
<comment type="pathway">
    <text evidence="1">Isoprenoid biosynthesis; isopentenyl diphosphate biosynthesis via DXP pathway; isopentenyl diphosphate from 1-deoxy-D-xylulose 5-phosphate: step 3/6.</text>
</comment>
<comment type="similarity">
    <text evidence="1">Belongs to the GHMP kinase family. IspE subfamily.</text>
</comment>
<protein>
    <recommendedName>
        <fullName evidence="1">4-diphosphocytidyl-2-C-methyl-D-erythritol kinase</fullName>
        <shortName evidence="1">CMK</shortName>
        <ecNumber evidence="1">2.7.1.148</ecNumber>
    </recommendedName>
    <alternativeName>
        <fullName evidence="1">4-(cytidine-5'-diphospho)-2-C-methyl-D-erythritol kinase</fullName>
    </alternativeName>
</protein>
<organism>
    <name type="scientific">Aromatoleum aromaticum (strain DSM 19018 / LMG 30748 / EbN1)</name>
    <name type="common">Azoarcus sp. (strain EbN1)</name>
    <dbReference type="NCBI Taxonomy" id="76114"/>
    <lineage>
        <taxon>Bacteria</taxon>
        <taxon>Pseudomonadati</taxon>
        <taxon>Pseudomonadota</taxon>
        <taxon>Betaproteobacteria</taxon>
        <taxon>Rhodocyclales</taxon>
        <taxon>Rhodocyclaceae</taxon>
        <taxon>Aromatoleum</taxon>
    </lineage>
</organism>
<evidence type="ECO:0000255" key="1">
    <source>
        <dbReference type="HAMAP-Rule" id="MF_00061"/>
    </source>
</evidence>
<feature type="chain" id="PRO_0000235061" description="4-diphosphocytidyl-2-C-methyl-D-erythritol kinase">
    <location>
        <begin position="1"/>
        <end position="284"/>
    </location>
</feature>
<feature type="active site" evidence="1">
    <location>
        <position position="17"/>
    </location>
</feature>
<feature type="active site" evidence="1">
    <location>
        <position position="142"/>
    </location>
</feature>
<feature type="binding site" evidence="1">
    <location>
        <begin position="100"/>
        <end position="110"/>
    </location>
    <ligand>
        <name>ATP</name>
        <dbReference type="ChEBI" id="CHEBI:30616"/>
    </ligand>
</feature>
<sequence>MDTAELTRLADCPAPAKLNLFLHVIGRRPDGYHLLQTAFRLLDWGDALSFELRHDGVVARATDLPGVSAEHDLVVRAARLLQSYTGCRLGADIRVDKRLPMGGGLGGGSSDAATTLIALNRLWRTGVRGEELTALGLRLGADVPFFIFGRDAFAEGVGDELRPLDLPPAWYVVVAPPVTVPTVEIFAAGELTRDTEPIKITDFAASTTRNDLQAVACSRYPEIGAAIDWLAQFAPARMTGSGACVFAQVASEDDAERIVASCPGSYRAWKARSVMQHPLRGWVG</sequence>
<name>ISPE_AROAE</name>
<accession>Q5P725</accession>
<keyword id="KW-0067">ATP-binding</keyword>
<keyword id="KW-0414">Isoprene biosynthesis</keyword>
<keyword id="KW-0418">Kinase</keyword>
<keyword id="KW-0547">Nucleotide-binding</keyword>
<keyword id="KW-1185">Reference proteome</keyword>
<keyword id="KW-0808">Transferase</keyword>
<dbReference type="EC" id="2.7.1.148" evidence="1"/>
<dbReference type="EMBL" id="CR555306">
    <property type="protein sequence ID" value="CAI06886.1"/>
    <property type="molecule type" value="Genomic_DNA"/>
</dbReference>
<dbReference type="RefSeq" id="WP_011236614.1">
    <property type="nucleotide sequence ID" value="NC_006513.1"/>
</dbReference>
<dbReference type="SMR" id="Q5P725"/>
<dbReference type="STRING" id="76114.ebA1405"/>
<dbReference type="KEGG" id="eba:ebA1405"/>
<dbReference type="eggNOG" id="COG1947">
    <property type="taxonomic scope" value="Bacteria"/>
</dbReference>
<dbReference type="HOGENOM" id="CLU_053057_3_0_4"/>
<dbReference type="OrthoDB" id="9809438at2"/>
<dbReference type="UniPathway" id="UPA00056">
    <property type="reaction ID" value="UER00094"/>
</dbReference>
<dbReference type="Proteomes" id="UP000006552">
    <property type="component" value="Chromosome"/>
</dbReference>
<dbReference type="GO" id="GO:0050515">
    <property type="term" value="F:4-(cytidine 5'-diphospho)-2-C-methyl-D-erythritol kinase activity"/>
    <property type="evidence" value="ECO:0007669"/>
    <property type="project" value="UniProtKB-UniRule"/>
</dbReference>
<dbReference type="GO" id="GO:0005524">
    <property type="term" value="F:ATP binding"/>
    <property type="evidence" value="ECO:0007669"/>
    <property type="project" value="UniProtKB-UniRule"/>
</dbReference>
<dbReference type="GO" id="GO:0019288">
    <property type="term" value="P:isopentenyl diphosphate biosynthetic process, methylerythritol 4-phosphate pathway"/>
    <property type="evidence" value="ECO:0007669"/>
    <property type="project" value="UniProtKB-UniRule"/>
</dbReference>
<dbReference type="GO" id="GO:0016114">
    <property type="term" value="P:terpenoid biosynthetic process"/>
    <property type="evidence" value="ECO:0007669"/>
    <property type="project" value="InterPro"/>
</dbReference>
<dbReference type="Gene3D" id="3.30.230.10">
    <property type="match status" value="1"/>
</dbReference>
<dbReference type="Gene3D" id="3.30.70.890">
    <property type="entry name" value="GHMP kinase, C-terminal domain"/>
    <property type="match status" value="1"/>
</dbReference>
<dbReference type="HAMAP" id="MF_00061">
    <property type="entry name" value="IspE"/>
    <property type="match status" value="1"/>
</dbReference>
<dbReference type="InterPro" id="IPR013750">
    <property type="entry name" value="GHMP_kinase_C_dom"/>
</dbReference>
<dbReference type="InterPro" id="IPR036554">
    <property type="entry name" value="GHMP_kinase_C_sf"/>
</dbReference>
<dbReference type="InterPro" id="IPR006204">
    <property type="entry name" value="GHMP_kinase_N_dom"/>
</dbReference>
<dbReference type="InterPro" id="IPR004424">
    <property type="entry name" value="IspE"/>
</dbReference>
<dbReference type="InterPro" id="IPR020568">
    <property type="entry name" value="Ribosomal_Su5_D2-typ_SF"/>
</dbReference>
<dbReference type="InterPro" id="IPR014721">
    <property type="entry name" value="Ribsml_uS5_D2-typ_fold_subgr"/>
</dbReference>
<dbReference type="NCBIfam" id="TIGR00154">
    <property type="entry name" value="ispE"/>
    <property type="match status" value="1"/>
</dbReference>
<dbReference type="PANTHER" id="PTHR43527">
    <property type="entry name" value="4-DIPHOSPHOCYTIDYL-2-C-METHYL-D-ERYTHRITOL KINASE, CHLOROPLASTIC"/>
    <property type="match status" value="1"/>
</dbReference>
<dbReference type="PANTHER" id="PTHR43527:SF2">
    <property type="entry name" value="4-DIPHOSPHOCYTIDYL-2-C-METHYL-D-ERYTHRITOL KINASE, CHLOROPLASTIC"/>
    <property type="match status" value="1"/>
</dbReference>
<dbReference type="Pfam" id="PF08544">
    <property type="entry name" value="GHMP_kinases_C"/>
    <property type="match status" value="1"/>
</dbReference>
<dbReference type="Pfam" id="PF00288">
    <property type="entry name" value="GHMP_kinases_N"/>
    <property type="match status" value="1"/>
</dbReference>
<dbReference type="PIRSF" id="PIRSF010376">
    <property type="entry name" value="IspE"/>
    <property type="match status" value="1"/>
</dbReference>
<dbReference type="SUPFAM" id="SSF55060">
    <property type="entry name" value="GHMP Kinase, C-terminal domain"/>
    <property type="match status" value="1"/>
</dbReference>
<dbReference type="SUPFAM" id="SSF54211">
    <property type="entry name" value="Ribosomal protein S5 domain 2-like"/>
    <property type="match status" value="1"/>
</dbReference>
<reference key="1">
    <citation type="journal article" date="2005" name="Arch. Microbiol.">
        <title>The genome sequence of an anaerobic aromatic-degrading denitrifying bacterium, strain EbN1.</title>
        <authorList>
            <person name="Rabus R."/>
            <person name="Kube M."/>
            <person name="Heider J."/>
            <person name="Beck A."/>
            <person name="Heitmann K."/>
            <person name="Widdel F."/>
            <person name="Reinhardt R."/>
        </authorList>
    </citation>
    <scope>NUCLEOTIDE SEQUENCE [LARGE SCALE GENOMIC DNA]</scope>
    <source>
        <strain>DSM 19018 / LMG 30748 / EbN1</strain>
    </source>
</reference>
<proteinExistence type="inferred from homology"/>